<reference key="1">
    <citation type="journal article" date="2005" name="Nucleic Acids Res.">
        <title>The genome sequence of Salmonella enterica serovar Choleraesuis, a highly invasive and resistant zoonotic pathogen.</title>
        <authorList>
            <person name="Chiu C.-H."/>
            <person name="Tang P."/>
            <person name="Chu C."/>
            <person name="Hu S."/>
            <person name="Bao Q."/>
            <person name="Yu J."/>
            <person name="Chou Y.-Y."/>
            <person name="Wang H.-S."/>
            <person name="Lee Y.-S."/>
        </authorList>
    </citation>
    <scope>NUCLEOTIDE SEQUENCE [LARGE SCALE GENOMIC DNA]</scope>
    <source>
        <strain>SC-B67</strain>
    </source>
</reference>
<accession>Q57I92</accession>
<comment type="function">
    <text evidence="2">Essential for recycling GMP and indirectly, cGMP.</text>
</comment>
<comment type="function">
    <text evidence="1">(Microbial infection) Catalyzes the phosphorylation of dZMP to dZDP, when the bacterium is infected by a phage that produces the substrate for the synthesis of dZTP (2- amino-2'-deoxyadenosine 5'-triphosphate), which is then used by the phage as a DNA polymerase substrate.</text>
</comment>
<comment type="catalytic activity">
    <reaction evidence="2">
        <text>GMP + ATP = GDP + ADP</text>
        <dbReference type="Rhea" id="RHEA:20780"/>
        <dbReference type="ChEBI" id="CHEBI:30616"/>
        <dbReference type="ChEBI" id="CHEBI:58115"/>
        <dbReference type="ChEBI" id="CHEBI:58189"/>
        <dbReference type="ChEBI" id="CHEBI:456216"/>
        <dbReference type="EC" id="2.7.4.8"/>
    </reaction>
</comment>
<comment type="catalytic activity">
    <reaction evidence="1">
        <text>dZMP + ATP = dZDP + ADP</text>
        <dbReference type="Rhea" id="RHEA:67640"/>
        <dbReference type="ChEBI" id="CHEBI:30616"/>
        <dbReference type="ChEBI" id="CHEBI:172927"/>
        <dbReference type="ChEBI" id="CHEBI:172929"/>
        <dbReference type="ChEBI" id="CHEBI:456216"/>
    </reaction>
</comment>
<comment type="pathway">
    <text evidence="1">Purine metabolism.</text>
</comment>
<comment type="subcellular location">
    <subcellularLocation>
        <location evidence="2">Cytoplasm</location>
    </subcellularLocation>
</comment>
<comment type="similarity">
    <text evidence="2">Belongs to the guanylate kinase family.</text>
</comment>
<comment type="sequence caution" evidence="3">
    <conflict type="erroneous initiation">
        <sequence resource="EMBL-CDS" id="AAX67570"/>
    </conflict>
</comment>
<protein>
    <recommendedName>
        <fullName evidence="2">Guanylate kinase</fullName>
        <ecNumber evidence="2">2.7.4.8</ecNumber>
    </recommendedName>
    <alternativeName>
        <fullName evidence="2">GMP kinase</fullName>
    </alternativeName>
</protein>
<gene>
    <name evidence="2" type="primary">gmk</name>
    <name type="ordered locus">SCH_3664</name>
</gene>
<feature type="chain" id="PRO_0000266394" description="Guanylate kinase">
    <location>
        <begin position="1"/>
        <end position="207"/>
    </location>
</feature>
<feature type="domain" description="Guanylate kinase-like" evidence="2">
    <location>
        <begin position="4"/>
        <end position="184"/>
    </location>
</feature>
<feature type="binding site" evidence="2">
    <location>
        <begin position="11"/>
        <end position="18"/>
    </location>
    <ligand>
        <name>ATP</name>
        <dbReference type="ChEBI" id="CHEBI:30616"/>
    </ligand>
</feature>
<organism>
    <name type="scientific">Salmonella choleraesuis (strain SC-B67)</name>
    <dbReference type="NCBI Taxonomy" id="321314"/>
    <lineage>
        <taxon>Bacteria</taxon>
        <taxon>Pseudomonadati</taxon>
        <taxon>Pseudomonadota</taxon>
        <taxon>Gammaproteobacteria</taxon>
        <taxon>Enterobacterales</taxon>
        <taxon>Enterobacteriaceae</taxon>
        <taxon>Salmonella</taxon>
    </lineage>
</organism>
<keyword id="KW-0067">ATP-binding</keyword>
<keyword id="KW-0963">Cytoplasm</keyword>
<keyword id="KW-0418">Kinase</keyword>
<keyword id="KW-0547">Nucleotide-binding</keyword>
<keyword id="KW-0808">Transferase</keyword>
<proteinExistence type="inferred from homology"/>
<sequence length="207" mass="23488">MAQGTLYIVSAPSGAGKSSLIQALLKTQPLYDTQVSVSHTTRAPRPGEVHGEHYFFVNHDEFKTMIGREAFLEHAEVFGNYYGTSRETTEQVLATGVDVFLDIDWQGAQQIREKMPQARSIFILPPSKIELDRRLRGRGQDSEEVIAKRMAQAVAEMSHYAEYDYLIVNDDFDTALSDLKTIIRAERLRMSRQKQRHDALISKLLAD</sequence>
<dbReference type="EC" id="2.7.4.8" evidence="2"/>
<dbReference type="EMBL" id="AE017220">
    <property type="protein sequence ID" value="AAX67570.1"/>
    <property type="status" value="ALT_INIT"/>
    <property type="molecule type" value="Genomic_DNA"/>
</dbReference>
<dbReference type="RefSeq" id="WP_024131377.1">
    <property type="nucleotide sequence ID" value="NC_006905.1"/>
</dbReference>
<dbReference type="SMR" id="Q57I92"/>
<dbReference type="KEGG" id="sec:SCH_3664"/>
<dbReference type="HOGENOM" id="CLU_001715_1_2_6"/>
<dbReference type="Proteomes" id="UP000000538">
    <property type="component" value="Chromosome"/>
</dbReference>
<dbReference type="GO" id="GO:0005829">
    <property type="term" value="C:cytosol"/>
    <property type="evidence" value="ECO:0007669"/>
    <property type="project" value="TreeGrafter"/>
</dbReference>
<dbReference type="GO" id="GO:0005524">
    <property type="term" value="F:ATP binding"/>
    <property type="evidence" value="ECO:0007669"/>
    <property type="project" value="UniProtKB-UniRule"/>
</dbReference>
<dbReference type="GO" id="GO:0004385">
    <property type="term" value="F:guanylate kinase activity"/>
    <property type="evidence" value="ECO:0007669"/>
    <property type="project" value="UniProtKB-UniRule"/>
</dbReference>
<dbReference type="CDD" id="cd00071">
    <property type="entry name" value="GMPK"/>
    <property type="match status" value="1"/>
</dbReference>
<dbReference type="FunFam" id="3.40.50.300:FF:000084">
    <property type="entry name" value="Guanylate kinase"/>
    <property type="match status" value="1"/>
</dbReference>
<dbReference type="FunFam" id="3.30.63.10:FF:000002">
    <property type="entry name" value="Guanylate kinase 1"/>
    <property type="match status" value="1"/>
</dbReference>
<dbReference type="Gene3D" id="3.30.63.10">
    <property type="entry name" value="Guanylate Kinase phosphate binding domain"/>
    <property type="match status" value="1"/>
</dbReference>
<dbReference type="Gene3D" id="3.40.50.300">
    <property type="entry name" value="P-loop containing nucleotide triphosphate hydrolases"/>
    <property type="match status" value="1"/>
</dbReference>
<dbReference type="HAMAP" id="MF_00328">
    <property type="entry name" value="Guanylate_kinase"/>
    <property type="match status" value="1"/>
</dbReference>
<dbReference type="InterPro" id="IPR008145">
    <property type="entry name" value="GK/Ca_channel_bsu"/>
</dbReference>
<dbReference type="InterPro" id="IPR008144">
    <property type="entry name" value="Guanylate_kin-like_dom"/>
</dbReference>
<dbReference type="InterPro" id="IPR017665">
    <property type="entry name" value="Guanylate_kinase"/>
</dbReference>
<dbReference type="InterPro" id="IPR020590">
    <property type="entry name" value="Guanylate_kinase_CS"/>
</dbReference>
<dbReference type="InterPro" id="IPR027417">
    <property type="entry name" value="P-loop_NTPase"/>
</dbReference>
<dbReference type="NCBIfam" id="TIGR03263">
    <property type="entry name" value="guanyl_kin"/>
    <property type="match status" value="1"/>
</dbReference>
<dbReference type="PANTHER" id="PTHR23117:SF13">
    <property type="entry name" value="GUANYLATE KINASE"/>
    <property type="match status" value="1"/>
</dbReference>
<dbReference type="PANTHER" id="PTHR23117">
    <property type="entry name" value="GUANYLATE KINASE-RELATED"/>
    <property type="match status" value="1"/>
</dbReference>
<dbReference type="Pfam" id="PF00625">
    <property type="entry name" value="Guanylate_kin"/>
    <property type="match status" value="1"/>
</dbReference>
<dbReference type="SMART" id="SM00072">
    <property type="entry name" value="GuKc"/>
    <property type="match status" value="1"/>
</dbReference>
<dbReference type="SUPFAM" id="SSF52540">
    <property type="entry name" value="P-loop containing nucleoside triphosphate hydrolases"/>
    <property type="match status" value="1"/>
</dbReference>
<dbReference type="PROSITE" id="PS00856">
    <property type="entry name" value="GUANYLATE_KINASE_1"/>
    <property type="match status" value="1"/>
</dbReference>
<dbReference type="PROSITE" id="PS50052">
    <property type="entry name" value="GUANYLATE_KINASE_2"/>
    <property type="match status" value="1"/>
</dbReference>
<evidence type="ECO:0000250" key="1">
    <source>
        <dbReference type="UniProtKB" id="Q9KNM4"/>
    </source>
</evidence>
<evidence type="ECO:0000255" key="2">
    <source>
        <dbReference type="HAMAP-Rule" id="MF_00328"/>
    </source>
</evidence>
<evidence type="ECO:0000305" key="3"/>
<name>KGUA_SALCH</name>